<organism>
    <name type="scientific">Streptococcus pneumoniae serotype 4 (strain ATCC BAA-334 / TIGR4)</name>
    <dbReference type="NCBI Taxonomy" id="170187"/>
    <lineage>
        <taxon>Bacteria</taxon>
        <taxon>Bacillati</taxon>
        <taxon>Bacillota</taxon>
        <taxon>Bacilli</taxon>
        <taxon>Lactobacillales</taxon>
        <taxon>Streptococcaceae</taxon>
        <taxon>Streptococcus</taxon>
    </lineage>
</organism>
<sequence length="74" mass="8268">MAVFEKVQEIIVEELGKDASEVTLESTFDDLDADSLDLFQVISEIEDAFDIQIEAENDLKTVGDLVAYVEEQAK</sequence>
<feature type="chain" id="PRO_0000180199" description="Acyl carrier protein">
    <location>
        <begin position="1"/>
        <end position="74"/>
    </location>
</feature>
<feature type="domain" description="Carrier" evidence="2">
    <location>
        <begin position="1"/>
        <end position="73"/>
    </location>
</feature>
<feature type="modified residue" description="O-(pantetheine 4'-phosphoryl)serine" evidence="2">
    <location>
        <position position="35"/>
    </location>
</feature>
<reference key="1">
    <citation type="journal article" date="2001" name="Science">
        <title>Complete genome sequence of a virulent isolate of Streptococcus pneumoniae.</title>
        <authorList>
            <person name="Tettelin H."/>
            <person name="Nelson K.E."/>
            <person name="Paulsen I.T."/>
            <person name="Eisen J.A."/>
            <person name="Read T.D."/>
            <person name="Peterson S.N."/>
            <person name="Heidelberg J.F."/>
            <person name="DeBoy R.T."/>
            <person name="Haft D.H."/>
            <person name="Dodson R.J."/>
            <person name="Durkin A.S."/>
            <person name="Gwinn M.L."/>
            <person name="Kolonay J.F."/>
            <person name="Nelson W.C."/>
            <person name="Peterson J.D."/>
            <person name="Umayam L.A."/>
            <person name="White O."/>
            <person name="Salzberg S.L."/>
            <person name="Lewis M.R."/>
            <person name="Radune D."/>
            <person name="Holtzapple E.K."/>
            <person name="Khouri H.M."/>
            <person name="Wolf A.M."/>
            <person name="Utterback T.R."/>
            <person name="Hansen C.L."/>
            <person name="McDonald L.A."/>
            <person name="Feldblyum T.V."/>
            <person name="Angiuoli S.V."/>
            <person name="Dickinson T."/>
            <person name="Hickey E.K."/>
            <person name="Holt I.E."/>
            <person name="Loftus B.J."/>
            <person name="Yang F."/>
            <person name="Smith H.O."/>
            <person name="Venter J.C."/>
            <person name="Dougherty B.A."/>
            <person name="Morrison D.A."/>
            <person name="Hollingshead S.K."/>
            <person name="Fraser C.M."/>
        </authorList>
    </citation>
    <scope>NUCLEOTIDE SEQUENCE [LARGE SCALE GENOMIC DNA]</scope>
    <source>
        <strain>ATCC BAA-334 / TIGR4</strain>
    </source>
</reference>
<accession>P0A2W0</accession>
<accession>Q9FBC6</accession>
<dbReference type="EMBL" id="AE005672">
    <property type="protein sequence ID" value="AAK74581.1"/>
    <property type="molecule type" value="Genomic_DNA"/>
</dbReference>
<dbReference type="PIR" id="D95048">
    <property type="entry name" value="D95048"/>
</dbReference>
<dbReference type="RefSeq" id="WP_000257841.1">
    <property type="nucleotide sequence ID" value="NZ_CP155539.1"/>
</dbReference>
<dbReference type="SMR" id="P0A2W0"/>
<dbReference type="PaxDb" id="170187-SP_0418"/>
<dbReference type="EnsemblBacteria" id="AAK74581">
    <property type="protein sequence ID" value="AAK74581"/>
    <property type="gene ID" value="SP_0418"/>
</dbReference>
<dbReference type="KEGG" id="spn:SP_0418"/>
<dbReference type="eggNOG" id="COG0236">
    <property type="taxonomic scope" value="Bacteria"/>
</dbReference>
<dbReference type="PhylomeDB" id="P0A2W0"/>
<dbReference type="BioCyc" id="SPNE170187:G1FZB-433-MONOMER"/>
<dbReference type="UniPathway" id="UPA00094"/>
<dbReference type="Proteomes" id="UP000000585">
    <property type="component" value="Chromosome"/>
</dbReference>
<dbReference type="GO" id="GO:0005829">
    <property type="term" value="C:cytosol"/>
    <property type="evidence" value="ECO:0007669"/>
    <property type="project" value="TreeGrafter"/>
</dbReference>
<dbReference type="GO" id="GO:0016020">
    <property type="term" value="C:membrane"/>
    <property type="evidence" value="ECO:0007669"/>
    <property type="project" value="GOC"/>
</dbReference>
<dbReference type="GO" id="GO:0000035">
    <property type="term" value="F:acyl binding"/>
    <property type="evidence" value="ECO:0007669"/>
    <property type="project" value="TreeGrafter"/>
</dbReference>
<dbReference type="GO" id="GO:0000036">
    <property type="term" value="F:acyl carrier activity"/>
    <property type="evidence" value="ECO:0007669"/>
    <property type="project" value="UniProtKB-UniRule"/>
</dbReference>
<dbReference type="GO" id="GO:0009245">
    <property type="term" value="P:lipid A biosynthetic process"/>
    <property type="evidence" value="ECO:0007669"/>
    <property type="project" value="TreeGrafter"/>
</dbReference>
<dbReference type="Gene3D" id="1.10.1200.10">
    <property type="entry name" value="ACP-like"/>
    <property type="match status" value="1"/>
</dbReference>
<dbReference type="HAMAP" id="MF_01217">
    <property type="entry name" value="Acyl_carrier"/>
    <property type="match status" value="1"/>
</dbReference>
<dbReference type="InterPro" id="IPR003231">
    <property type="entry name" value="ACP"/>
</dbReference>
<dbReference type="InterPro" id="IPR036736">
    <property type="entry name" value="ACP-like_sf"/>
</dbReference>
<dbReference type="InterPro" id="IPR009081">
    <property type="entry name" value="PP-bd_ACP"/>
</dbReference>
<dbReference type="NCBIfam" id="NF002148">
    <property type="entry name" value="PRK00982.1-2"/>
    <property type="match status" value="1"/>
</dbReference>
<dbReference type="NCBIfam" id="NF002150">
    <property type="entry name" value="PRK00982.1-4"/>
    <property type="match status" value="1"/>
</dbReference>
<dbReference type="PANTHER" id="PTHR20863">
    <property type="entry name" value="ACYL CARRIER PROTEIN"/>
    <property type="match status" value="1"/>
</dbReference>
<dbReference type="PANTHER" id="PTHR20863:SF62">
    <property type="entry name" value="ACYL CARRIER PROTEIN"/>
    <property type="match status" value="1"/>
</dbReference>
<dbReference type="Pfam" id="PF00550">
    <property type="entry name" value="PP-binding"/>
    <property type="match status" value="1"/>
</dbReference>
<dbReference type="SUPFAM" id="SSF47336">
    <property type="entry name" value="ACP-like"/>
    <property type="match status" value="1"/>
</dbReference>
<dbReference type="PROSITE" id="PS50075">
    <property type="entry name" value="CARRIER"/>
    <property type="match status" value="1"/>
</dbReference>
<comment type="function">
    <text evidence="1">Carrier of the growing fatty acid chain in fatty acid biosynthesis.</text>
</comment>
<comment type="pathway">
    <text evidence="1">Lipid metabolism; fatty acid biosynthesis.</text>
</comment>
<comment type="subcellular location">
    <subcellularLocation>
        <location evidence="1">Cytoplasm</location>
    </subcellularLocation>
</comment>
<comment type="PTM">
    <text evidence="1">4'-phosphopantetheine is transferred from CoA to a specific serine of apo-ACP by AcpS. This modification is essential for activity because fatty acids are bound in thioester linkage to the sulfhydryl of the prosthetic group.</text>
</comment>
<comment type="similarity">
    <text evidence="1">Belongs to the acyl carrier protein (ACP) family.</text>
</comment>
<evidence type="ECO:0000255" key="1">
    <source>
        <dbReference type="HAMAP-Rule" id="MF_01217"/>
    </source>
</evidence>
<evidence type="ECO:0000255" key="2">
    <source>
        <dbReference type="PROSITE-ProRule" id="PRU00258"/>
    </source>
</evidence>
<name>ACP_STRPN</name>
<protein>
    <recommendedName>
        <fullName evidence="1">Acyl carrier protein</fullName>
        <shortName evidence="1">ACP</shortName>
    </recommendedName>
</protein>
<proteinExistence type="inferred from homology"/>
<keyword id="KW-0963">Cytoplasm</keyword>
<keyword id="KW-0275">Fatty acid biosynthesis</keyword>
<keyword id="KW-0276">Fatty acid metabolism</keyword>
<keyword id="KW-0444">Lipid biosynthesis</keyword>
<keyword id="KW-0443">Lipid metabolism</keyword>
<keyword id="KW-0596">Phosphopantetheine</keyword>
<keyword id="KW-0597">Phosphoprotein</keyword>
<keyword id="KW-1185">Reference proteome</keyword>
<gene>
    <name evidence="1" type="primary">acpP</name>
    <name type="synonym">acp</name>
    <name type="ordered locus">SP_0418</name>
</gene>